<sequence>MAASDLESKAKEAFVDDDFELAAELYTQAIDAGPATADLYADRAQAHIKLGNYTEAVADANKAIGLDPTMHKAYYRKGAACIKLEEYQTAKAALELGSSYAPGDSRFTRLLKECDECIAEESSQAPAKNVEAPVAATVEDKEDVANMDNTPPVVEPPSKPKYRHDYYNSATEVVLTIYAKGVPADSVVIDFGDQMLSVSIEVPGEEPYHFQPRLFSKIIPEKCKYQVLSTKVEIRLAKAEQVTWTTLDYSGRPKAIPQKISTPAETAPRPSYPSSKSKKDWDKLEAEVKKEEKEEKLEGDAALNKFFRDIYKDADEDMRRAMDKSFRESNGTVLSTNWKDVGSKTVEASPPDGMELKKWEI</sequence>
<feature type="chain" id="PRO_0000458767" description="Protein SGT1 homolog">
    <location>
        <begin position="1"/>
        <end position="361"/>
    </location>
</feature>
<feature type="repeat" description="TPR 1" evidence="1">
    <location>
        <begin position="3"/>
        <end position="36"/>
    </location>
</feature>
<feature type="repeat" description="TPR 2" evidence="1">
    <location>
        <begin position="37"/>
        <end position="70"/>
    </location>
</feature>
<feature type="repeat" description="TPR 3" evidence="1">
    <location>
        <begin position="71"/>
        <end position="104"/>
    </location>
</feature>
<feature type="domain" description="CS" evidence="3">
    <location>
        <begin position="159"/>
        <end position="248"/>
    </location>
</feature>
<feature type="domain" description="SGS" evidence="2">
    <location>
        <begin position="271"/>
        <end position="361"/>
    </location>
</feature>
<feature type="region of interest" description="Disordered" evidence="4">
    <location>
        <begin position="255"/>
        <end position="295"/>
    </location>
</feature>
<feature type="compositionally biased region" description="Basic and acidic residues" evidence="4">
    <location>
        <begin position="277"/>
        <end position="295"/>
    </location>
</feature>
<feature type="modified residue" description="Phosphothreonine" evidence="5">
    <location>
        <position position="150"/>
    </location>
</feature>
<feature type="modified residue" description="Phosphothreonine" evidence="5">
    <location>
        <position position="262"/>
    </location>
</feature>
<feature type="mutagenesis site" description="Does not affect nuclear localization." evidence="5">
    <original>T</original>
    <variation>A</variation>
    <location>
        <position position="150"/>
    </location>
</feature>
<feature type="sequence conflict" description="In Ref. 1; AKD95366." evidence="7" ref="1">
    <original>CIAE</original>
    <variation>RIAD</variation>
    <location>
        <begin position="117"/>
        <end position="120"/>
    </location>
</feature>
<feature type="sequence conflict" description="In Ref. 1; AKD95366." evidence="7" ref="1">
    <original>D</original>
    <variation>E</variation>
    <location>
        <position position="193"/>
    </location>
</feature>
<feature type="sequence conflict" description="In Ref. 1; AKD95366." evidence="7" ref="1">
    <original>A</original>
    <variation>T</variation>
    <location>
        <position position="264"/>
    </location>
</feature>
<dbReference type="EMBL" id="KP789376">
    <property type="protein sequence ID" value="AKD95366.1"/>
    <property type="molecule type" value="mRNA"/>
</dbReference>
<dbReference type="EMBL" id="CM000784">
    <property type="protein sequence ID" value="AQK96783.1"/>
    <property type="molecule type" value="Genomic_DNA"/>
</dbReference>
<dbReference type="EMBL" id="NCVQ01000009">
    <property type="protein sequence ID" value="PWZ10550.1"/>
    <property type="molecule type" value="Genomic_DNA"/>
</dbReference>
<dbReference type="RefSeq" id="XP_008656684.1">
    <property type="nucleotide sequence ID" value="XM_008658462.1"/>
</dbReference>
<dbReference type="SMR" id="A0A3L6DPG1"/>
<dbReference type="IntAct" id="A0A3L6DPG1">
    <property type="interactions" value="12"/>
</dbReference>
<dbReference type="STRING" id="4577.K7VJS8"/>
<dbReference type="iPTMnet" id="A0A3L6DPG1"/>
<dbReference type="PaxDb" id="4577-GRMZM2G149704_P02"/>
<dbReference type="EnsemblPlants" id="Zm00001eb358660_T002">
    <property type="protein sequence ID" value="Zm00001eb358660_P002"/>
    <property type="gene ID" value="Zm00001eb358660"/>
</dbReference>
<dbReference type="Gramene" id="Zm00001eb358660_T002">
    <property type="protein sequence ID" value="Zm00001eb358660_P002"/>
    <property type="gene ID" value="Zm00001eb358660"/>
</dbReference>
<dbReference type="KEGG" id="zma:103636097"/>
<dbReference type="eggNOG" id="KOG0376">
    <property type="taxonomic scope" value="Eukaryota"/>
</dbReference>
<dbReference type="eggNOG" id="KOG1309">
    <property type="taxonomic scope" value="Eukaryota"/>
</dbReference>
<dbReference type="HOGENOM" id="CLU_039532_1_0_1"/>
<dbReference type="OrthoDB" id="1898560at2759"/>
<dbReference type="Proteomes" id="UP000007305">
    <property type="component" value="Chromosome 8"/>
</dbReference>
<dbReference type="Proteomes" id="UP000251960">
    <property type="component" value="Chromosome 8"/>
</dbReference>
<dbReference type="ExpressionAtlas" id="A0A3L6DPG1">
    <property type="expression patterns" value="baseline and differential"/>
</dbReference>
<dbReference type="GO" id="GO:0005737">
    <property type="term" value="C:cytoplasm"/>
    <property type="evidence" value="ECO:0007669"/>
    <property type="project" value="UniProtKB-SubCell"/>
</dbReference>
<dbReference type="GO" id="GO:0005634">
    <property type="term" value="C:nucleus"/>
    <property type="evidence" value="ECO:0007669"/>
    <property type="project" value="UniProtKB-SubCell"/>
</dbReference>
<dbReference type="GO" id="GO:0051087">
    <property type="term" value="F:protein-folding chaperone binding"/>
    <property type="evidence" value="ECO:0007669"/>
    <property type="project" value="InterPro"/>
</dbReference>
<dbReference type="GO" id="GO:0006952">
    <property type="term" value="P:defense response"/>
    <property type="evidence" value="ECO:0007669"/>
    <property type="project" value="UniProtKB-KW"/>
</dbReference>
<dbReference type="CDD" id="cd06466">
    <property type="entry name" value="p23_CS_SGT1_like"/>
    <property type="match status" value="1"/>
</dbReference>
<dbReference type="FunFam" id="1.25.40.10:FF:000259">
    <property type="entry name" value="Protein SGT1 homolog"/>
    <property type="match status" value="1"/>
</dbReference>
<dbReference type="FunFam" id="2.60.40.790:FF:000041">
    <property type="entry name" value="Protein SGT1 homolog A"/>
    <property type="match status" value="1"/>
</dbReference>
<dbReference type="Gene3D" id="2.60.40.790">
    <property type="match status" value="1"/>
</dbReference>
<dbReference type="Gene3D" id="1.25.40.10">
    <property type="entry name" value="Tetratricopeptide repeat domain"/>
    <property type="match status" value="1"/>
</dbReference>
<dbReference type="InterPro" id="IPR007052">
    <property type="entry name" value="CS_dom"/>
</dbReference>
<dbReference type="InterPro" id="IPR008978">
    <property type="entry name" value="HSP20-like_chaperone"/>
</dbReference>
<dbReference type="InterPro" id="IPR007699">
    <property type="entry name" value="SGS_dom"/>
</dbReference>
<dbReference type="InterPro" id="IPR044563">
    <property type="entry name" value="Sgt1-like"/>
</dbReference>
<dbReference type="InterPro" id="IPR011990">
    <property type="entry name" value="TPR-like_helical_dom_sf"/>
</dbReference>
<dbReference type="InterPro" id="IPR019734">
    <property type="entry name" value="TPR_rpt"/>
</dbReference>
<dbReference type="PANTHER" id="PTHR45862">
    <property type="entry name" value="PROTEIN SGT1 HOMOLOG"/>
    <property type="match status" value="1"/>
</dbReference>
<dbReference type="Pfam" id="PF04969">
    <property type="entry name" value="CS"/>
    <property type="match status" value="1"/>
</dbReference>
<dbReference type="Pfam" id="PF05002">
    <property type="entry name" value="SGS"/>
    <property type="match status" value="1"/>
</dbReference>
<dbReference type="Pfam" id="PF13432">
    <property type="entry name" value="TPR_16"/>
    <property type="match status" value="1"/>
</dbReference>
<dbReference type="Pfam" id="PF13181">
    <property type="entry name" value="TPR_8"/>
    <property type="match status" value="1"/>
</dbReference>
<dbReference type="SMART" id="SM00028">
    <property type="entry name" value="TPR"/>
    <property type="match status" value="3"/>
</dbReference>
<dbReference type="SUPFAM" id="SSF49764">
    <property type="entry name" value="HSP20-like chaperones"/>
    <property type="match status" value="1"/>
</dbReference>
<dbReference type="SUPFAM" id="SSF48452">
    <property type="entry name" value="TPR-like"/>
    <property type="match status" value="1"/>
</dbReference>
<dbReference type="PROSITE" id="PS51203">
    <property type="entry name" value="CS"/>
    <property type="match status" value="1"/>
</dbReference>
<dbReference type="PROSITE" id="PS51048">
    <property type="entry name" value="SGS"/>
    <property type="match status" value="1"/>
</dbReference>
<dbReference type="PROSITE" id="PS50005">
    <property type="entry name" value="TPR"/>
    <property type="match status" value="1"/>
</dbReference>
<gene>
    <name evidence="6" type="primary">SGT1</name>
    <name evidence="9" type="ORF">ZEAMMB73_Zm00001d011401</name>
    <name evidence="10" type="ORF">Zm00014a_041257</name>
</gene>
<organism>
    <name type="scientific">Zea mays</name>
    <name type="common">Maize</name>
    <dbReference type="NCBI Taxonomy" id="4577"/>
    <lineage>
        <taxon>Eukaryota</taxon>
        <taxon>Viridiplantae</taxon>
        <taxon>Streptophyta</taxon>
        <taxon>Embryophyta</taxon>
        <taxon>Tracheophyta</taxon>
        <taxon>Spermatophyta</taxon>
        <taxon>Magnoliopsida</taxon>
        <taxon>Liliopsida</taxon>
        <taxon>Poales</taxon>
        <taxon>Poaceae</taxon>
        <taxon>PACMAD clade</taxon>
        <taxon>Panicoideae</taxon>
        <taxon>Andropogonodae</taxon>
        <taxon>Andropogoneae</taxon>
        <taxon>Tripsacinae</taxon>
        <taxon>Zea</taxon>
    </lineage>
</organism>
<name>SGT1_MAIZE</name>
<proteinExistence type="evidence at protein level"/>
<reference key="1">
    <citation type="journal article" date="2015" name="Plant Cell">
        <title>A secreted effector protein of Ustilago maydis guides maize leaf cells to form tumors.</title>
        <authorList>
            <person name="Redkar A."/>
            <person name="Hoser R."/>
            <person name="Schilling L."/>
            <person name="Zechmann B."/>
            <person name="Krzymowska M."/>
            <person name="Walbot V."/>
            <person name="Doehlemann G."/>
        </authorList>
    </citation>
    <scope>NUCLEOTIDE SEQUENCE [MRNA]</scope>
    <scope>FUNCTION</scope>
    <scope>SUBCELLULAR LOCATION</scope>
    <scope>PHOSPHORYLATION AT THR-150 AND THR-262</scope>
    <scope>MUTAGENESIS OF THR-150</scope>
</reference>
<reference key="2">
    <citation type="journal article" date="2009" name="Science">
        <title>The B73 maize genome: complexity, diversity, and dynamics.</title>
        <authorList>
            <person name="Schnable P.S."/>
            <person name="Ware D."/>
            <person name="Fulton R.S."/>
            <person name="Stein J.C."/>
            <person name="Wei F."/>
            <person name="Pasternak S."/>
            <person name="Liang C."/>
            <person name="Zhang J."/>
            <person name="Fulton L."/>
            <person name="Graves T.A."/>
            <person name="Minx P."/>
            <person name="Reily A.D."/>
            <person name="Courtney L."/>
            <person name="Kruchowski S.S."/>
            <person name="Tomlinson C."/>
            <person name="Strong C."/>
            <person name="Delehaunty K."/>
            <person name="Fronick C."/>
            <person name="Courtney B."/>
            <person name="Rock S.M."/>
            <person name="Belter E."/>
            <person name="Du F."/>
            <person name="Kim K."/>
            <person name="Abbott R.M."/>
            <person name="Cotton M."/>
            <person name="Levy A."/>
            <person name="Marchetto P."/>
            <person name="Ochoa K."/>
            <person name="Jackson S.M."/>
            <person name="Gillam B."/>
            <person name="Chen W."/>
            <person name="Yan L."/>
            <person name="Higginbotham J."/>
            <person name="Cardenas M."/>
            <person name="Waligorski J."/>
            <person name="Applebaum E."/>
            <person name="Phelps L."/>
            <person name="Falcone J."/>
            <person name="Kanchi K."/>
            <person name="Thane T."/>
            <person name="Scimone A."/>
            <person name="Thane N."/>
            <person name="Henke J."/>
            <person name="Wang T."/>
            <person name="Ruppert J."/>
            <person name="Shah N."/>
            <person name="Rotter K."/>
            <person name="Hodges J."/>
            <person name="Ingenthron E."/>
            <person name="Cordes M."/>
            <person name="Kohlberg S."/>
            <person name="Sgro J."/>
            <person name="Delgado B."/>
            <person name="Mead K."/>
            <person name="Chinwalla A."/>
            <person name="Leonard S."/>
            <person name="Crouse K."/>
            <person name="Collura K."/>
            <person name="Kudrna D."/>
            <person name="Currie J."/>
            <person name="He R."/>
            <person name="Angelova A."/>
            <person name="Rajasekar S."/>
            <person name="Mueller T."/>
            <person name="Lomeli R."/>
            <person name="Scara G."/>
            <person name="Ko A."/>
            <person name="Delaney K."/>
            <person name="Wissotski M."/>
            <person name="Lopez G."/>
            <person name="Campos D."/>
            <person name="Braidotti M."/>
            <person name="Ashley E."/>
            <person name="Golser W."/>
            <person name="Kim H."/>
            <person name="Lee S."/>
            <person name="Lin J."/>
            <person name="Dujmic Z."/>
            <person name="Kim W."/>
            <person name="Talag J."/>
            <person name="Zuccolo A."/>
            <person name="Fan C."/>
            <person name="Sebastian A."/>
            <person name="Kramer M."/>
            <person name="Spiegel L."/>
            <person name="Nascimento L."/>
            <person name="Zutavern T."/>
            <person name="Miller B."/>
            <person name="Ambroise C."/>
            <person name="Muller S."/>
            <person name="Spooner W."/>
            <person name="Narechania A."/>
            <person name="Ren L."/>
            <person name="Wei S."/>
            <person name="Kumari S."/>
            <person name="Faga B."/>
            <person name="Levy M.J."/>
            <person name="McMahan L."/>
            <person name="Van Buren P."/>
            <person name="Vaughn M.W."/>
            <person name="Ying K."/>
            <person name="Yeh C.-T."/>
            <person name="Emrich S.J."/>
            <person name="Jia Y."/>
            <person name="Kalyanaraman A."/>
            <person name="Hsia A.-P."/>
            <person name="Barbazuk W.B."/>
            <person name="Baucom R.S."/>
            <person name="Brutnell T.P."/>
            <person name="Carpita N.C."/>
            <person name="Chaparro C."/>
            <person name="Chia J.-M."/>
            <person name="Deragon J.-M."/>
            <person name="Estill J.C."/>
            <person name="Fu Y."/>
            <person name="Jeddeloh J.A."/>
            <person name="Han Y."/>
            <person name="Lee H."/>
            <person name="Li P."/>
            <person name="Lisch D.R."/>
            <person name="Liu S."/>
            <person name="Liu Z."/>
            <person name="Nagel D.H."/>
            <person name="McCann M.C."/>
            <person name="SanMiguel P."/>
            <person name="Myers A.M."/>
            <person name="Nettleton D."/>
            <person name="Nguyen J."/>
            <person name="Penning B.W."/>
            <person name="Ponnala L."/>
            <person name="Schneider K.L."/>
            <person name="Schwartz D.C."/>
            <person name="Sharma A."/>
            <person name="Soderlund C."/>
            <person name="Springer N.M."/>
            <person name="Sun Q."/>
            <person name="Wang H."/>
            <person name="Waterman M."/>
            <person name="Westerman R."/>
            <person name="Wolfgruber T.K."/>
            <person name="Yang L."/>
            <person name="Yu Y."/>
            <person name="Zhang L."/>
            <person name="Zhou S."/>
            <person name="Zhu Q."/>
            <person name="Bennetzen J.L."/>
            <person name="Dawe R.K."/>
            <person name="Jiang J."/>
            <person name="Jiang N."/>
            <person name="Presting G.G."/>
            <person name="Wessler S.R."/>
            <person name="Aluru S."/>
            <person name="Martienssen R.A."/>
            <person name="Clifton S.W."/>
            <person name="McCombie W.R."/>
            <person name="Wing R.A."/>
            <person name="Wilson R.K."/>
        </authorList>
    </citation>
    <scope>NUCLEOTIDE SEQUENCE [LARGE SCALE GENOMIC DNA]</scope>
    <source>
        <strain>cv. B73</strain>
    </source>
</reference>
<reference key="3">
    <citation type="journal article" date="2018" name="Nat. Genet.">
        <title>Extensive intraspecific gene order and gene structural variations between Mo17 and other maize genomes.</title>
        <authorList>
            <person name="Sun S."/>
            <person name="Zhou Y."/>
            <person name="Chen J."/>
            <person name="Shi J."/>
            <person name="Zhao H."/>
            <person name="Zhao H."/>
            <person name="Song W."/>
            <person name="Zhang M."/>
            <person name="Cui Y."/>
            <person name="Dong X."/>
            <person name="Liu H."/>
            <person name="Ma X."/>
            <person name="Jiao Y."/>
            <person name="Wang B."/>
            <person name="Wei X."/>
            <person name="Stein J.C."/>
            <person name="Glaubitz J.C."/>
            <person name="Lu F."/>
            <person name="Yu G."/>
            <person name="Liang C."/>
            <person name="Fengler K."/>
            <person name="Li B."/>
            <person name="Rafalski A."/>
            <person name="Schnable P.S."/>
            <person name="Ware D.H."/>
            <person name="Buckler E.S."/>
            <person name="Lai J."/>
        </authorList>
    </citation>
    <scope>NUCLEOTIDE SEQUENCE [LARGE SCALE GENOMIC DNA]</scope>
    <source>
        <strain>cv. Missouri 17</strain>
    </source>
</reference>
<accession>A0A3L6DPG1</accession>
<accession>A0A0F6QI37</accession>
<accession>K7VJS8</accession>
<keyword id="KW-0963">Cytoplasm</keyword>
<keyword id="KW-0539">Nucleus</keyword>
<keyword id="KW-0597">Phosphoprotein</keyword>
<keyword id="KW-0611">Plant defense</keyword>
<keyword id="KW-1185">Reference proteome</keyword>
<keyword id="KW-0677">Repeat</keyword>
<keyword id="KW-0802">TPR repeat</keyword>
<comment type="function">
    <text evidence="8">May act as positive regulator of basal defense (Probable). May be involved in basal disease resistance to the fungal pathogen Ustilago maydis (Probable).</text>
</comment>
<comment type="subcellular location">
    <subcellularLocation>
        <location evidence="5">Cytoplasm</location>
    </subcellularLocation>
    <subcellularLocation>
        <location evidence="5">Nucleus</location>
    </subcellularLocation>
</comment>
<comment type="PTM">
    <text evidence="5">Constitutively phosphorylated at Thr-262 and phosphorylated at Thr-150 upon infection with the fungal pathogen Ustilago maydis.</text>
</comment>
<comment type="similarity">
    <text evidence="7">Belongs to the SGT1 family.</text>
</comment>
<protein>
    <recommendedName>
        <fullName evidence="6">Protein SGT1 homolog</fullName>
        <shortName evidence="6">Zm-SGT1</shortName>
    </recommendedName>
    <alternativeName>
        <fullName evidence="6">Suppressor of G2 allele of SKP1 homolog</fullName>
    </alternativeName>
</protein>
<evidence type="ECO:0000255" key="1">
    <source>
        <dbReference type="PROSITE-ProRule" id="PRU00339"/>
    </source>
</evidence>
<evidence type="ECO:0000255" key="2">
    <source>
        <dbReference type="PROSITE-ProRule" id="PRU00386"/>
    </source>
</evidence>
<evidence type="ECO:0000255" key="3">
    <source>
        <dbReference type="PROSITE-ProRule" id="PRU00547"/>
    </source>
</evidence>
<evidence type="ECO:0000256" key="4">
    <source>
        <dbReference type="SAM" id="MobiDB-lite"/>
    </source>
</evidence>
<evidence type="ECO:0000269" key="5">
    <source>
    </source>
</evidence>
<evidence type="ECO:0000303" key="6">
    <source>
    </source>
</evidence>
<evidence type="ECO:0000305" key="7"/>
<evidence type="ECO:0000305" key="8">
    <source>
    </source>
</evidence>
<evidence type="ECO:0000312" key="9">
    <source>
        <dbReference type="EMBL" id="AQK96783.1"/>
    </source>
</evidence>
<evidence type="ECO:0000312" key="10">
    <source>
        <dbReference type="EMBL" id="PWZ10550.1"/>
    </source>
</evidence>